<keyword id="KW-0131">Cell cycle</keyword>
<keyword id="KW-0132">Cell division</keyword>
<keyword id="KW-0574">Periplasm</keyword>
<keyword id="KW-0732">Signal</keyword>
<feature type="signal peptide" evidence="1">
    <location>
        <begin position="1"/>
        <end position="22"/>
    </location>
</feature>
<feature type="chain" id="PRO_1000147665" description="Tol-Pal system protein TolB" evidence="1">
    <location>
        <begin position="23"/>
        <end position="450"/>
    </location>
</feature>
<organism>
    <name type="scientific">Vibrio atlanticus (strain LGP32)</name>
    <name type="common">Vibrio splendidus (strain Mel32)</name>
    <dbReference type="NCBI Taxonomy" id="575788"/>
    <lineage>
        <taxon>Bacteria</taxon>
        <taxon>Pseudomonadati</taxon>
        <taxon>Pseudomonadota</taxon>
        <taxon>Gammaproteobacteria</taxon>
        <taxon>Vibrionales</taxon>
        <taxon>Vibrionaceae</taxon>
        <taxon>Vibrio</taxon>
    </lineage>
</organism>
<name>TOLB_VIBA3</name>
<sequence>MLKKLLLSFVFLIATSSQFAHAALELVITDGINSARPIAIVPFRWEGAGPLPHDVSAVIASDLQRSGKFSPVATSKMPQTPYSETEVNFDAWTNLGVDSLLTGSITKNAEGQYVVNYQLIDIVRGQLTKGQSRALSDEGQLVLSKDHVLFNKKATVPGKRLREYAHRISDLVYEELTGEKGAFLTRISYVVVNDKDKYPYQLRVADYDGFNERLVLRSKQPLMSPAWSPDGKKLAYVSFQNGQAEIFIMNIYTGEREKVTSYPRHNGAPRFSPDGKTLALVLSKTGSLQVYTLDLASRKLTQITRGRSNNTEPFWHPDGKSLIFTSDRGGKPQIYNVNLSNNSTSRITWQGSQNLGGQITPDGRFLIMVNRSNSGFNLAKQDLETGAVQVLTKTLLDESPSIAPNGGMVIYSSIYNKTNVLSMVSIDGRFKARLPATNGRVRAPSWSPFL</sequence>
<gene>
    <name evidence="1" type="primary">tolB</name>
    <name type="ordered locus">VS_1116</name>
</gene>
<proteinExistence type="inferred from homology"/>
<evidence type="ECO:0000255" key="1">
    <source>
        <dbReference type="HAMAP-Rule" id="MF_00671"/>
    </source>
</evidence>
<comment type="function">
    <text evidence="1">Part of the Tol-Pal system, which plays a role in outer membrane invagination during cell division and is important for maintaining outer membrane integrity.</text>
</comment>
<comment type="subunit">
    <text evidence="1">The Tol-Pal system is composed of five core proteins: the inner membrane proteins TolA, TolQ and TolR, the periplasmic protein TolB and the outer membrane protein Pal. They form a network linking the inner and outer membranes and the peptidoglycan layer.</text>
</comment>
<comment type="subcellular location">
    <subcellularLocation>
        <location evidence="1">Periplasm</location>
    </subcellularLocation>
</comment>
<comment type="similarity">
    <text evidence="1">Belongs to the TolB family.</text>
</comment>
<accession>B7VMJ2</accession>
<reference key="1">
    <citation type="submission" date="2009-02" db="EMBL/GenBank/DDBJ databases">
        <title>Vibrio splendidus str. LGP32 complete genome.</title>
        <authorList>
            <person name="Mazel D."/>
            <person name="Le Roux F."/>
        </authorList>
    </citation>
    <scope>NUCLEOTIDE SEQUENCE [LARGE SCALE GENOMIC DNA]</scope>
    <source>
        <strain>LGP32</strain>
    </source>
</reference>
<dbReference type="EMBL" id="FM954972">
    <property type="protein sequence ID" value="CAV18243.1"/>
    <property type="molecule type" value="Genomic_DNA"/>
</dbReference>
<dbReference type="SMR" id="B7VMJ2"/>
<dbReference type="STRING" id="575788.VS_1116"/>
<dbReference type="KEGG" id="vsp:VS_1116"/>
<dbReference type="eggNOG" id="COG0823">
    <property type="taxonomic scope" value="Bacteria"/>
</dbReference>
<dbReference type="HOGENOM" id="CLU_047123_0_0_6"/>
<dbReference type="Proteomes" id="UP000009100">
    <property type="component" value="Chromosome 1"/>
</dbReference>
<dbReference type="GO" id="GO:0042597">
    <property type="term" value="C:periplasmic space"/>
    <property type="evidence" value="ECO:0007669"/>
    <property type="project" value="UniProtKB-SubCell"/>
</dbReference>
<dbReference type="GO" id="GO:0051301">
    <property type="term" value="P:cell division"/>
    <property type="evidence" value="ECO:0007669"/>
    <property type="project" value="UniProtKB-UniRule"/>
</dbReference>
<dbReference type="GO" id="GO:0017038">
    <property type="term" value="P:protein import"/>
    <property type="evidence" value="ECO:0007669"/>
    <property type="project" value="InterPro"/>
</dbReference>
<dbReference type="Gene3D" id="2.120.10.30">
    <property type="entry name" value="TolB, C-terminal domain"/>
    <property type="match status" value="1"/>
</dbReference>
<dbReference type="Gene3D" id="3.40.50.10070">
    <property type="entry name" value="TolB, N-terminal domain"/>
    <property type="match status" value="1"/>
</dbReference>
<dbReference type="HAMAP" id="MF_00671">
    <property type="entry name" value="TolB"/>
    <property type="match status" value="1"/>
</dbReference>
<dbReference type="InterPro" id="IPR011042">
    <property type="entry name" value="6-blade_b-propeller_TolB-like"/>
</dbReference>
<dbReference type="InterPro" id="IPR011659">
    <property type="entry name" value="PD40"/>
</dbReference>
<dbReference type="InterPro" id="IPR014167">
    <property type="entry name" value="Tol-Pal_TolB"/>
</dbReference>
<dbReference type="InterPro" id="IPR007195">
    <property type="entry name" value="TolB_N"/>
</dbReference>
<dbReference type="NCBIfam" id="TIGR02800">
    <property type="entry name" value="propeller_TolB"/>
    <property type="match status" value="1"/>
</dbReference>
<dbReference type="PANTHER" id="PTHR36842:SF1">
    <property type="entry name" value="PROTEIN TOLB"/>
    <property type="match status" value="1"/>
</dbReference>
<dbReference type="PANTHER" id="PTHR36842">
    <property type="entry name" value="PROTEIN TOLB HOMOLOG"/>
    <property type="match status" value="1"/>
</dbReference>
<dbReference type="Pfam" id="PF07676">
    <property type="entry name" value="PD40"/>
    <property type="match status" value="3"/>
</dbReference>
<dbReference type="Pfam" id="PF04052">
    <property type="entry name" value="TolB_N"/>
    <property type="match status" value="1"/>
</dbReference>
<dbReference type="SUPFAM" id="SSF52964">
    <property type="entry name" value="TolB, N-terminal domain"/>
    <property type="match status" value="1"/>
</dbReference>
<dbReference type="SUPFAM" id="SSF69304">
    <property type="entry name" value="Tricorn protease N-terminal domain"/>
    <property type="match status" value="1"/>
</dbReference>
<protein>
    <recommendedName>
        <fullName evidence="1">Tol-Pal system protein TolB</fullName>
    </recommendedName>
</protein>